<feature type="signal peptide" evidence="3">
    <location>
        <begin position="1"/>
        <end position="18"/>
    </location>
</feature>
<feature type="propeptide" id="PRO_0000033936" evidence="3">
    <location>
        <begin position="19"/>
        <end position="266"/>
    </location>
</feature>
<feature type="chain" id="PRO_0000033937" description="Growth/differentiation factor 8">
    <location>
        <begin position="267"/>
        <end position="375"/>
    </location>
</feature>
<feature type="site" description="Cleavage" evidence="1">
    <location>
        <begin position="98"/>
        <end position="99"/>
    </location>
</feature>
<feature type="glycosylation site" description="N-linked (GlcNAc...) asparagine" evidence="3">
    <location>
        <position position="47"/>
    </location>
</feature>
<feature type="glycosylation site" description="N-linked (GlcNAc...) asparagine" evidence="3">
    <location>
        <position position="71"/>
    </location>
</feature>
<feature type="disulfide bond" evidence="2">
    <location>
        <begin position="272"/>
        <end position="282"/>
    </location>
</feature>
<feature type="disulfide bond" evidence="2">
    <location>
        <begin position="281"/>
        <end position="340"/>
    </location>
</feature>
<feature type="disulfide bond" evidence="2">
    <location>
        <begin position="309"/>
        <end position="372"/>
    </location>
</feature>
<feature type="disulfide bond" evidence="2">
    <location>
        <begin position="313"/>
        <end position="374"/>
    </location>
</feature>
<feature type="disulfide bond" description="Interchain" evidence="2">
    <location>
        <position position="339"/>
    </location>
</feature>
<feature type="sequence variant" description="In mh; Piedmontese breed." evidence="5">
    <original>F</original>
    <variation>L</variation>
    <location>
        <position position="94"/>
    </location>
</feature>
<feature type="sequence variant" description="In mh; Piedmontese breed." evidence="4 5">
    <original>C</original>
    <variation>Y</variation>
    <location>
        <position position="313"/>
    </location>
</feature>
<feature type="sequence conflict" description="In Ref. 1; AAB81508." evidence="6" ref="1">
    <original>M</original>
    <variation>T</variation>
    <location>
        <position position="14"/>
    </location>
</feature>
<feature type="sequence conflict" description="In Ref. 4; BAB79498." evidence="6" ref="4">
    <original>N</original>
    <variation>S</variation>
    <location>
        <position position="214"/>
    </location>
</feature>
<organism>
    <name type="scientific">Bos taurus</name>
    <name type="common">Bovine</name>
    <dbReference type="NCBI Taxonomy" id="9913"/>
    <lineage>
        <taxon>Eukaryota</taxon>
        <taxon>Metazoa</taxon>
        <taxon>Chordata</taxon>
        <taxon>Craniata</taxon>
        <taxon>Vertebrata</taxon>
        <taxon>Euteleostomi</taxon>
        <taxon>Mammalia</taxon>
        <taxon>Eutheria</taxon>
        <taxon>Laurasiatheria</taxon>
        <taxon>Artiodactyla</taxon>
        <taxon>Ruminantia</taxon>
        <taxon>Pecora</taxon>
        <taxon>Bovidae</taxon>
        <taxon>Bovinae</taxon>
        <taxon>Bos</taxon>
    </lineage>
</organism>
<gene>
    <name type="primary">MSTN</name>
    <name type="synonym">GDF8</name>
    <name type="synonym">MH</name>
</gene>
<comment type="function">
    <text evidence="1">Acts specifically as a negative regulator of skeletal muscle growth.</text>
</comment>
<comment type="subunit">
    <text evidence="1">Homodimer; disulfide-linked. Interacts with WFIKKN2, leading to inhibit its activity. Interacts with FSTL3.</text>
</comment>
<comment type="subcellular location">
    <subcellularLocation>
        <location evidence="1">Secreted</location>
    </subcellularLocation>
</comment>
<comment type="tissue specificity">
    <text>Specifically expressed in developing and adult skeletal muscle. Highest levels found in the hindlimb semimembranosus and biceps-femoris muscles; low levels in other hindlimb muscles.</text>
</comment>
<comment type="developmental stage">
    <text>Widely expressed throughout development. Low levels are found up to day 29 embryos. Levels increase from day 31 up until late gestation.</text>
</comment>
<comment type="PTM">
    <text evidence="1">Synthesized as large precursor molecule that undergoes proteolytic cleavage to generate an N-terminal propeptide and a disulfide linked C-terminal dimer, which is the biologically active molecule. The circulating form consists of a latent complex of the C-terminal dimer and other proteins, including its propeptide, which maintain the C-terminal dimer in a latent, inactive state. Ligand activation requires additional cleavage of the prodomain by a tolloid-like metalloproteinase.</text>
</comment>
<comment type="disease">
    <text evidence="4 5">Defects in MSTN are the cause of the double-muscle phenotype or muscular hypertrophy (mh), an autosomal recessive disease frequently found in the Belgian blue and Piedmontese cattle breeds. This disease is characterized by an increased number of muscle fibers (hyperplasia), resulting in an increase in muscle mass of 20-25%.</text>
</comment>
<comment type="similarity">
    <text evidence="6">Belongs to the TGF-beta family.</text>
</comment>
<keyword id="KW-0165">Cleavage on pair of basic residues</keyword>
<keyword id="KW-0202">Cytokine</keyword>
<keyword id="KW-0225">Disease variant</keyword>
<keyword id="KW-1015">Disulfide bond</keyword>
<keyword id="KW-0325">Glycoprotein</keyword>
<keyword id="KW-0339">Growth factor</keyword>
<keyword id="KW-0358">Heparin-binding</keyword>
<keyword id="KW-1185">Reference proteome</keyword>
<keyword id="KW-0964">Secreted</keyword>
<keyword id="KW-0732">Signal</keyword>
<reference key="1">
    <citation type="journal article" date="1997" name="Genome Res.">
        <title>Mutations in myostatin (GDF8) in double-muscled Belgian Blue and Piedmontese cattle.</title>
        <authorList>
            <person name="Kambadur R."/>
            <person name="Sharma M."/>
            <person name="Smith T.P.L."/>
            <person name="Bass J.J."/>
        </authorList>
    </citation>
    <scope>NUCLEOTIDE SEQUENCE [MRNA]</scope>
    <scope>VARIANT MH TYR-313</scope>
    <source>
        <strain>Friesian</strain>
        <tissue>Embryo</tissue>
        <tissue>Muscle</tissue>
    </source>
</reference>
<reference key="2">
    <citation type="journal article" date="1997" name="Proc. Natl. Acad. Sci. U.S.A.">
        <title>Double muscling in cattle due to mutations in the myostatin gene.</title>
        <authorList>
            <person name="McPherron A.C."/>
            <person name="Lee S.-J."/>
        </authorList>
    </citation>
    <scope>NUCLEOTIDE SEQUENCE [MRNA]</scope>
    <scope>VARIANTS MH LEU-94 AND TYR-313</scope>
    <source>
        <strain>Holstein</strain>
        <tissue>Skeletal muscle</tissue>
    </source>
</reference>
<reference key="3">
    <citation type="journal article" date="2001" name="Mol. Cell. Biochem.">
        <title>Genomic organization and neonatal expression of the bovine myostatin gene.</title>
        <authorList>
            <person name="Jeanplong F."/>
            <person name="Sharma M."/>
            <person name="Somers W.G."/>
            <person name="Bass J.J."/>
            <person name="Kambadur R."/>
        </authorList>
    </citation>
    <scope>NUCLEOTIDE SEQUENCE [GENOMIC DNA]</scope>
</reference>
<reference key="4">
    <citation type="journal article" date="2003" name="Anim. Sci. J.">
        <title>Nucleotide sequence of myostatin gene and its developmental expression in skeletal muscles of Japanese Black cattle.</title>
        <authorList>
            <person name="Shibata M."/>
            <person name="Ohshima K."/>
            <person name="Kojima T."/>
            <person name="Muramoto T."/>
            <person name="Matsumoto K."/>
            <person name="Komatsu M."/>
            <person name="Aikawa K."/>
            <person name="Fujimura S."/>
            <person name="Kadowaki M."/>
        </authorList>
    </citation>
    <scope>NUCLEOTIDE SEQUENCE [GENOMIC DNA]</scope>
    <source>
        <strain>Japanese black</strain>
    </source>
</reference>
<reference key="5">
    <citation type="submission" date="2002-10" db="EMBL/GenBank/DDBJ databases">
        <title>Characterization of the bovine myostatin gene in Korean native cattle.</title>
        <authorList>
            <person name="Kim D.Y."/>
            <person name="Yoo S.L."/>
            <person name="Sang B.C."/>
            <person name="Cho K.W."/>
            <person name="Lee J.H."/>
        </authorList>
    </citation>
    <scope>NUCLEOTIDE SEQUENCE [MRNA]</scope>
    <source>
        <strain>Korean</strain>
    </source>
</reference>
<reference key="6">
    <citation type="submission" date="2004-12" db="EMBL/GenBank/DDBJ databases">
        <title>Nucleotide sequence determination and molecular characterization of GDF-8 gene from Beefmaster cattle.</title>
        <authorList>
            <person name="De la Rosa X.F."/>
            <person name="Sifuentes A.M."/>
        </authorList>
    </citation>
    <scope>NUCLEOTIDE SEQUENCE [GENOMIC DNA]</scope>
    <source>
        <strain>Beefmaster</strain>
    </source>
</reference>
<reference key="7">
    <citation type="submission" date="2007-03" db="EMBL/GenBank/DDBJ databases">
        <authorList>
            <consortium name="NIH - Mammalian Gene Collection (MGC) project"/>
        </authorList>
    </citation>
    <scope>NUCLEOTIDE SEQUENCE [LARGE SCALE MRNA]</scope>
    <source>
        <strain>Hereford</strain>
        <tissue>Basal ganglia</tissue>
    </source>
</reference>
<proteinExistence type="evidence at protein level"/>
<protein>
    <recommendedName>
        <fullName>Growth/differentiation factor 8</fullName>
        <shortName>GDF-8</shortName>
    </recommendedName>
    <alternativeName>
        <fullName>Myostatin</fullName>
    </alternativeName>
</protein>
<sequence>MQKLQISVYIYLFMLIVAGPVDLNENSEQKENVEKEGLCNACLWRENTTSSRLEAIKIQILSKLRLETAPNISKDAIRQLLPKAPPLLELIDQFDVQRDASSDGSLEDDDYHARTETVITMPTESDLLTQVEGKPKCCFFKFSSKIQYNKLVKAQLWIYLRPVKTPATVFVQILRLIKPMKDGTRYTGIRSLKLDMNPGTGIWQSIDVKTVLQNWLKQPESNLGIEIKALDENGHDLAVTFPEPGEDGLTPFLEVKVTDTPKRSRRDFGLDCDEHSTESRCCRYPLTVDFEAFGWDWIIAPKRYKANYCSGECEFVFLQKYPHTHLVHQANPRGSAGPCCTPTKMSPINMLYFNGEGQIIYGKIPAMVVDRCGCS</sequence>
<name>GDF8_BOVIN</name>
<evidence type="ECO:0000250" key="1">
    <source>
        <dbReference type="UniProtKB" id="O08689"/>
    </source>
</evidence>
<evidence type="ECO:0000250" key="2">
    <source>
        <dbReference type="UniProtKB" id="O14793"/>
    </source>
</evidence>
<evidence type="ECO:0000255" key="3"/>
<evidence type="ECO:0000269" key="4">
    <source>
    </source>
</evidence>
<evidence type="ECO:0000269" key="5">
    <source>
    </source>
</evidence>
<evidence type="ECO:0000305" key="6"/>
<accession>O18836</accession>
<accession>A4IFF8</accession>
<accession>O18829</accession>
<accession>Q564D4</accession>
<accession>Q8WNS6</accession>
<accession>Q95N97</accession>
<dbReference type="EMBL" id="AF019761">
    <property type="protein sequence ID" value="AAB81508.1"/>
    <property type="molecule type" value="mRNA"/>
</dbReference>
<dbReference type="EMBL" id="AF019620">
    <property type="protein sequence ID" value="AAB86687.1"/>
    <property type="molecule type" value="mRNA"/>
</dbReference>
<dbReference type="EMBL" id="AF320998">
    <property type="protein sequence ID" value="AAG48116.1"/>
    <property type="molecule type" value="Genomic_DNA"/>
</dbReference>
<dbReference type="EMBL" id="AB076403">
    <property type="protein sequence ID" value="BAB79498.1"/>
    <property type="molecule type" value="Genomic_DNA"/>
</dbReference>
<dbReference type="EMBL" id="AY160688">
    <property type="protein sequence ID" value="AAN65183.1"/>
    <property type="molecule type" value="mRNA"/>
</dbReference>
<dbReference type="EMBL" id="AY850105">
    <property type="protein sequence ID" value="AAX51855.1"/>
    <property type="molecule type" value="Genomic_DNA"/>
</dbReference>
<dbReference type="EMBL" id="BC134563">
    <property type="protein sequence ID" value="AAI34564.1"/>
    <property type="molecule type" value="mRNA"/>
</dbReference>
<dbReference type="RefSeq" id="NP_001001525.1">
    <property type="nucleotide sequence ID" value="NM_001001525.3"/>
</dbReference>
<dbReference type="SMR" id="O18836"/>
<dbReference type="FunCoup" id="O18836">
    <property type="interactions" value="43"/>
</dbReference>
<dbReference type="STRING" id="9913.ENSBTAP00000015674"/>
<dbReference type="GlyCosmos" id="O18836">
    <property type="glycosylation" value="2 sites, No reported glycans"/>
</dbReference>
<dbReference type="GlyGen" id="O18836">
    <property type="glycosylation" value="2 sites"/>
</dbReference>
<dbReference type="PaxDb" id="9913-ENSBTAP00000015674"/>
<dbReference type="Ensembl" id="ENSBTAT00000015674.6">
    <property type="protein sequence ID" value="ENSBTAP00000015674.4"/>
    <property type="gene ID" value="ENSBTAG00000011808.6"/>
</dbReference>
<dbReference type="GeneID" id="281187"/>
<dbReference type="KEGG" id="bta:281187"/>
<dbReference type="CTD" id="2660"/>
<dbReference type="VEuPathDB" id="HostDB:ENSBTAG00000011808"/>
<dbReference type="VGNC" id="VGNC:31709">
    <property type="gene designation" value="MSTN"/>
</dbReference>
<dbReference type="eggNOG" id="KOG3900">
    <property type="taxonomic scope" value="Eukaryota"/>
</dbReference>
<dbReference type="GeneTree" id="ENSGT00940000160657"/>
<dbReference type="HOGENOM" id="CLU_020515_6_1_1"/>
<dbReference type="InParanoid" id="O18836"/>
<dbReference type="OMA" id="CNACMWR"/>
<dbReference type="OrthoDB" id="5948587at2759"/>
<dbReference type="TreeFam" id="TF318514"/>
<dbReference type="Proteomes" id="UP000009136">
    <property type="component" value="Chromosome 2"/>
</dbReference>
<dbReference type="Bgee" id="ENSBTAG00000011808">
    <property type="expression patterns" value="Expressed in rectus femoris and 39 other cell types or tissues"/>
</dbReference>
<dbReference type="GO" id="GO:0005615">
    <property type="term" value="C:extracellular space"/>
    <property type="evidence" value="ECO:0000318"/>
    <property type="project" value="GO_Central"/>
</dbReference>
<dbReference type="GO" id="GO:0005125">
    <property type="term" value="F:cytokine activity"/>
    <property type="evidence" value="ECO:0000318"/>
    <property type="project" value="GO_Central"/>
</dbReference>
<dbReference type="GO" id="GO:0008083">
    <property type="term" value="F:growth factor activity"/>
    <property type="evidence" value="ECO:0007669"/>
    <property type="project" value="UniProtKB-KW"/>
</dbReference>
<dbReference type="GO" id="GO:0008201">
    <property type="term" value="F:heparin binding"/>
    <property type="evidence" value="ECO:0007669"/>
    <property type="project" value="UniProtKB-KW"/>
</dbReference>
<dbReference type="GO" id="GO:0042802">
    <property type="term" value="F:identical protein binding"/>
    <property type="evidence" value="ECO:0000250"/>
    <property type="project" value="UniProtKB"/>
</dbReference>
<dbReference type="GO" id="GO:0042803">
    <property type="term" value="F:protein homodimerization activity"/>
    <property type="evidence" value="ECO:0007669"/>
    <property type="project" value="Ensembl"/>
</dbReference>
<dbReference type="GO" id="GO:0043539">
    <property type="term" value="F:protein serine/threonine kinase activator activity"/>
    <property type="evidence" value="ECO:0007669"/>
    <property type="project" value="Ensembl"/>
</dbReference>
<dbReference type="GO" id="GO:0071549">
    <property type="term" value="P:cellular response to dexamethasone stimulus"/>
    <property type="evidence" value="ECO:0007669"/>
    <property type="project" value="Ensembl"/>
</dbReference>
<dbReference type="GO" id="GO:0046716">
    <property type="term" value="P:muscle cell cellular homeostasis"/>
    <property type="evidence" value="ECO:0007669"/>
    <property type="project" value="Ensembl"/>
</dbReference>
<dbReference type="GO" id="GO:0014839">
    <property type="term" value="P:myoblast migration involved in skeletal muscle regeneration"/>
    <property type="evidence" value="ECO:0000250"/>
    <property type="project" value="UniProtKB"/>
</dbReference>
<dbReference type="GO" id="GO:0048147">
    <property type="term" value="P:negative regulation of fibroblast proliferation"/>
    <property type="evidence" value="ECO:0000314"/>
    <property type="project" value="CACAO"/>
</dbReference>
<dbReference type="GO" id="GO:0046627">
    <property type="term" value="P:negative regulation of insulin receptor signaling pathway"/>
    <property type="evidence" value="ECO:0007669"/>
    <property type="project" value="Ensembl"/>
</dbReference>
<dbReference type="GO" id="GO:0045662">
    <property type="term" value="P:negative regulation of myoblast differentiation"/>
    <property type="evidence" value="ECO:0007669"/>
    <property type="project" value="Ensembl"/>
</dbReference>
<dbReference type="GO" id="GO:0051898">
    <property type="term" value="P:negative regulation of phosphatidylinositol 3-kinase/protein kinase B signal transduction"/>
    <property type="evidence" value="ECO:0007669"/>
    <property type="project" value="Ensembl"/>
</dbReference>
<dbReference type="GO" id="GO:0048632">
    <property type="term" value="P:negative regulation of skeletal muscle tissue growth"/>
    <property type="evidence" value="ECO:0007669"/>
    <property type="project" value="Ensembl"/>
</dbReference>
<dbReference type="GO" id="GO:0045893">
    <property type="term" value="P:positive regulation of DNA-templated transcription"/>
    <property type="evidence" value="ECO:0007669"/>
    <property type="project" value="Ensembl"/>
</dbReference>
<dbReference type="GO" id="GO:0010592">
    <property type="term" value="P:positive regulation of lamellipodium assembly"/>
    <property type="evidence" value="ECO:0000250"/>
    <property type="project" value="UniProtKB"/>
</dbReference>
<dbReference type="GO" id="GO:0010759">
    <property type="term" value="P:positive regulation of macrophage chemotaxis"/>
    <property type="evidence" value="ECO:0000250"/>
    <property type="project" value="UniProtKB"/>
</dbReference>
<dbReference type="GO" id="GO:0014816">
    <property type="term" value="P:skeletal muscle satellite cell differentiation"/>
    <property type="evidence" value="ECO:0007669"/>
    <property type="project" value="Ensembl"/>
</dbReference>
<dbReference type="GO" id="GO:0007179">
    <property type="term" value="P:transforming growth factor beta receptor signaling pathway"/>
    <property type="evidence" value="ECO:0007669"/>
    <property type="project" value="Ensembl"/>
</dbReference>
<dbReference type="CDD" id="cd19388">
    <property type="entry name" value="TGF_beta_GDF8"/>
    <property type="match status" value="1"/>
</dbReference>
<dbReference type="FunFam" id="2.60.120.970:FF:000001">
    <property type="entry name" value="Growth/differentiation factor 8"/>
    <property type="match status" value="1"/>
</dbReference>
<dbReference type="FunFam" id="2.10.90.10:FF:000006">
    <property type="entry name" value="growth/differentiation factor 8"/>
    <property type="match status" value="1"/>
</dbReference>
<dbReference type="Gene3D" id="2.60.120.970">
    <property type="match status" value="1"/>
</dbReference>
<dbReference type="Gene3D" id="2.10.90.10">
    <property type="entry name" value="Cystine-knot cytokines"/>
    <property type="match status" value="1"/>
</dbReference>
<dbReference type="InterPro" id="IPR029034">
    <property type="entry name" value="Cystine-knot_cytokine"/>
</dbReference>
<dbReference type="InterPro" id="IPR001839">
    <property type="entry name" value="TGF-b_C"/>
</dbReference>
<dbReference type="InterPro" id="IPR001111">
    <property type="entry name" value="TGF-b_propeptide"/>
</dbReference>
<dbReference type="InterPro" id="IPR015615">
    <property type="entry name" value="TGF-beta-rel"/>
</dbReference>
<dbReference type="InterPro" id="IPR017948">
    <property type="entry name" value="TGFb_CS"/>
</dbReference>
<dbReference type="PANTHER" id="PTHR11848:SF150">
    <property type="entry name" value="GROWTH_DIFFERENTIATION FACTOR 8"/>
    <property type="match status" value="1"/>
</dbReference>
<dbReference type="PANTHER" id="PTHR11848">
    <property type="entry name" value="TGF-BETA FAMILY"/>
    <property type="match status" value="1"/>
</dbReference>
<dbReference type="Pfam" id="PF00019">
    <property type="entry name" value="TGF_beta"/>
    <property type="match status" value="1"/>
</dbReference>
<dbReference type="Pfam" id="PF00688">
    <property type="entry name" value="TGFb_propeptide"/>
    <property type="match status" value="1"/>
</dbReference>
<dbReference type="SMART" id="SM00204">
    <property type="entry name" value="TGFB"/>
    <property type="match status" value="1"/>
</dbReference>
<dbReference type="SUPFAM" id="SSF57501">
    <property type="entry name" value="Cystine-knot cytokines"/>
    <property type="match status" value="1"/>
</dbReference>
<dbReference type="PROSITE" id="PS00250">
    <property type="entry name" value="TGF_BETA_1"/>
    <property type="match status" value="1"/>
</dbReference>
<dbReference type="PROSITE" id="PS51362">
    <property type="entry name" value="TGF_BETA_2"/>
    <property type="match status" value="1"/>
</dbReference>